<comment type="subcellular location">
    <subcellularLocation>
        <location evidence="2">Cell membrane</location>
        <topology evidence="2">Multi-pass membrane protein</topology>
    </subcellularLocation>
</comment>
<name>YBHM_ECOLI</name>
<dbReference type="EMBL" id="U00096">
    <property type="protein sequence ID" value="AAC73874.1"/>
    <property type="molecule type" value="Genomic_DNA"/>
</dbReference>
<dbReference type="EMBL" id="AP009048">
    <property type="protein sequence ID" value="BAA35446.1"/>
    <property type="molecule type" value="Genomic_DNA"/>
</dbReference>
<dbReference type="PIR" id="C64815">
    <property type="entry name" value="C64815"/>
</dbReference>
<dbReference type="RefSeq" id="NP_415308.1">
    <property type="nucleotide sequence ID" value="NC_000913.3"/>
</dbReference>
<dbReference type="RefSeq" id="WP_000446911.1">
    <property type="nucleotide sequence ID" value="NZ_LN832404.1"/>
</dbReference>
<dbReference type="SMR" id="P75769"/>
<dbReference type="BioGRID" id="4262179">
    <property type="interactions" value="20"/>
</dbReference>
<dbReference type="DIP" id="DIP-11416N"/>
<dbReference type="FunCoup" id="P75769">
    <property type="interactions" value="79"/>
</dbReference>
<dbReference type="STRING" id="511145.b0787"/>
<dbReference type="PaxDb" id="511145-b0787"/>
<dbReference type="EnsemblBacteria" id="AAC73874">
    <property type="protein sequence ID" value="AAC73874"/>
    <property type="gene ID" value="b0787"/>
</dbReference>
<dbReference type="GeneID" id="949001"/>
<dbReference type="KEGG" id="ecj:JW0770"/>
<dbReference type="KEGG" id="eco:b0787"/>
<dbReference type="KEGG" id="ecoc:C3026_04985"/>
<dbReference type="PATRIC" id="fig|1411691.4.peg.1491"/>
<dbReference type="EchoBASE" id="EB3433"/>
<dbReference type="eggNOG" id="COG0670">
    <property type="taxonomic scope" value="Bacteria"/>
</dbReference>
<dbReference type="HOGENOM" id="CLU_088893_0_0_6"/>
<dbReference type="InParanoid" id="P75769"/>
<dbReference type="OMA" id="IAVVINC"/>
<dbReference type="OrthoDB" id="6573044at2"/>
<dbReference type="PhylomeDB" id="P75769"/>
<dbReference type="BioCyc" id="EcoCyc:G6404-MONOMER"/>
<dbReference type="PRO" id="PR:P75769"/>
<dbReference type="Proteomes" id="UP000000625">
    <property type="component" value="Chromosome"/>
</dbReference>
<dbReference type="GO" id="GO:0005886">
    <property type="term" value="C:plasma membrane"/>
    <property type="evidence" value="ECO:0000314"/>
    <property type="project" value="EcoCyc"/>
</dbReference>
<dbReference type="CDD" id="cd10432">
    <property type="entry name" value="BI-1-like_bacterial"/>
    <property type="match status" value="1"/>
</dbReference>
<dbReference type="InterPro" id="IPR006214">
    <property type="entry name" value="Bax_inhibitor_1-related"/>
</dbReference>
<dbReference type="Pfam" id="PF01027">
    <property type="entry name" value="Bax1-I"/>
    <property type="match status" value="1"/>
</dbReference>
<gene>
    <name type="primary">ybhM</name>
    <name type="ordered locus">b0787</name>
    <name type="ordered locus">JW0770</name>
</gene>
<protein>
    <recommendedName>
        <fullName>Uncharacterized protein YbhM</fullName>
    </recommendedName>
</protein>
<feature type="chain" id="PRO_0000168714" description="Uncharacterized protein YbhM">
    <location>
        <begin position="1"/>
        <end position="237"/>
    </location>
</feature>
<feature type="transmembrane region" description="Helical" evidence="1">
    <location>
        <begin position="19"/>
        <end position="39"/>
    </location>
</feature>
<feature type="transmembrane region" description="Helical" evidence="1">
    <location>
        <begin position="51"/>
        <end position="71"/>
    </location>
</feature>
<feature type="transmembrane region" description="Helical" evidence="1">
    <location>
        <begin position="81"/>
        <end position="101"/>
    </location>
</feature>
<feature type="transmembrane region" description="Helical" evidence="1">
    <location>
        <begin position="106"/>
        <end position="126"/>
    </location>
</feature>
<feature type="transmembrane region" description="Helical" evidence="1">
    <location>
        <begin position="136"/>
        <end position="156"/>
    </location>
</feature>
<feature type="transmembrane region" description="Helical" evidence="1">
    <location>
        <begin position="159"/>
        <end position="179"/>
    </location>
</feature>
<feature type="transmembrane region" description="Helical" evidence="1">
    <location>
        <begin position="209"/>
        <end position="229"/>
    </location>
</feature>
<keyword id="KW-1003">Cell membrane</keyword>
<keyword id="KW-0472">Membrane</keyword>
<keyword id="KW-1185">Reference proteome</keyword>
<keyword id="KW-0812">Transmembrane</keyword>
<keyword id="KW-1133">Transmembrane helix</keyword>
<accession>P75769</accession>
<organism>
    <name type="scientific">Escherichia coli (strain K12)</name>
    <dbReference type="NCBI Taxonomy" id="83333"/>
    <lineage>
        <taxon>Bacteria</taxon>
        <taxon>Pseudomonadati</taxon>
        <taxon>Pseudomonadota</taxon>
        <taxon>Gammaproteobacteria</taxon>
        <taxon>Enterobacterales</taxon>
        <taxon>Enterobacteriaceae</taxon>
        <taxon>Escherichia</taxon>
    </lineage>
</organism>
<evidence type="ECO:0000255" key="1"/>
<evidence type="ECO:0000305" key="2"/>
<reference key="1">
    <citation type="journal article" date="1996" name="DNA Res.">
        <title>A 718-kb DNA sequence of the Escherichia coli K-12 genome corresponding to the 12.7-28.0 min region on the linkage map.</title>
        <authorList>
            <person name="Oshima T."/>
            <person name="Aiba H."/>
            <person name="Baba T."/>
            <person name="Fujita K."/>
            <person name="Hayashi K."/>
            <person name="Honjo A."/>
            <person name="Ikemoto K."/>
            <person name="Inada T."/>
            <person name="Itoh T."/>
            <person name="Kajihara M."/>
            <person name="Kanai K."/>
            <person name="Kashimoto K."/>
            <person name="Kimura S."/>
            <person name="Kitagawa M."/>
            <person name="Makino K."/>
            <person name="Masuda S."/>
            <person name="Miki T."/>
            <person name="Mizobuchi K."/>
            <person name="Mori H."/>
            <person name="Motomura K."/>
            <person name="Nakamura Y."/>
            <person name="Nashimoto H."/>
            <person name="Nishio Y."/>
            <person name="Saito N."/>
            <person name="Sampei G."/>
            <person name="Seki Y."/>
            <person name="Tagami H."/>
            <person name="Takemoto K."/>
            <person name="Wada C."/>
            <person name="Yamamoto Y."/>
            <person name="Yano M."/>
            <person name="Horiuchi T."/>
        </authorList>
    </citation>
    <scope>NUCLEOTIDE SEQUENCE [LARGE SCALE GENOMIC DNA]</scope>
    <source>
        <strain>K12 / W3110 / ATCC 27325 / DSM 5911</strain>
    </source>
</reference>
<reference key="2">
    <citation type="journal article" date="1997" name="Science">
        <title>The complete genome sequence of Escherichia coli K-12.</title>
        <authorList>
            <person name="Blattner F.R."/>
            <person name="Plunkett G. III"/>
            <person name="Bloch C.A."/>
            <person name="Perna N.T."/>
            <person name="Burland V."/>
            <person name="Riley M."/>
            <person name="Collado-Vides J."/>
            <person name="Glasner J.D."/>
            <person name="Rode C.K."/>
            <person name="Mayhew G.F."/>
            <person name="Gregor J."/>
            <person name="Davis N.W."/>
            <person name="Kirkpatrick H.A."/>
            <person name="Goeden M.A."/>
            <person name="Rose D.J."/>
            <person name="Mau B."/>
            <person name="Shao Y."/>
        </authorList>
    </citation>
    <scope>NUCLEOTIDE SEQUENCE [LARGE SCALE GENOMIC DNA]</scope>
    <source>
        <strain>K12 / MG1655 / ATCC 47076</strain>
    </source>
</reference>
<reference key="3">
    <citation type="journal article" date="2006" name="Mol. Syst. Biol.">
        <title>Highly accurate genome sequences of Escherichia coli K-12 strains MG1655 and W3110.</title>
        <authorList>
            <person name="Hayashi K."/>
            <person name="Morooka N."/>
            <person name="Yamamoto Y."/>
            <person name="Fujita K."/>
            <person name="Isono K."/>
            <person name="Choi S."/>
            <person name="Ohtsubo E."/>
            <person name="Baba T."/>
            <person name="Wanner B.L."/>
            <person name="Mori H."/>
            <person name="Horiuchi T."/>
        </authorList>
    </citation>
    <scope>NUCLEOTIDE SEQUENCE [LARGE SCALE GENOMIC DNA]</scope>
    <source>
        <strain>K12 / W3110 / ATCC 27325 / DSM 5911</strain>
    </source>
</reference>
<sequence>MESYSQNSNKLDFQHEARILNGIWLITALGLVATAGLAWGAKYIEITATKYDSPPMYVAIGLLLLCMYGLSKDINKINAAIAGVIYLFLLSLVAIVVASLVPVYAIIIVFSTAGAMFLISMLAGLLFNVDPGSHRFIIMMTLTGLALVIIVNAALMSERPIWIISCLMIVLWSGIISHGRNKLLELAGKCHSEELWSPVRCAFTGALTLYYYFIGFFGILAAIAITLVWQRHTRFFH</sequence>
<proteinExistence type="predicted"/>